<evidence type="ECO:0000255" key="1">
    <source>
        <dbReference type="HAMAP-Rule" id="MF_00154"/>
    </source>
</evidence>
<evidence type="ECO:0000305" key="2"/>
<accession>Q1CL75</accession>
<accession>C4GQJ7</accession>
<protein>
    <recommendedName>
        <fullName evidence="1">Protoheme IX farnesyltransferase</fullName>
        <ecNumber evidence="1">2.5.1.141</ecNumber>
    </recommendedName>
    <alternativeName>
        <fullName evidence="1">Heme B farnesyltransferase</fullName>
    </alternativeName>
    <alternativeName>
        <fullName evidence="1">Heme O synthase</fullName>
    </alternativeName>
</protein>
<name>CYOE_YERPN</name>
<dbReference type="EC" id="2.5.1.141" evidence="1"/>
<dbReference type="EMBL" id="CP000305">
    <property type="protein sequence ID" value="ABG17255.1"/>
    <property type="status" value="ALT_INIT"/>
    <property type="molecule type" value="Genomic_DNA"/>
</dbReference>
<dbReference type="EMBL" id="ACNQ01000008">
    <property type="protein sequence ID" value="EEO77338.1"/>
    <property type="molecule type" value="Genomic_DNA"/>
</dbReference>
<dbReference type="SMR" id="Q1CL75"/>
<dbReference type="KEGG" id="ypn:YPN_0923"/>
<dbReference type="HOGENOM" id="CLU_029631_0_0_6"/>
<dbReference type="UniPathway" id="UPA00834">
    <property type="reaction ID" value="UER00712"/>
</dbReference>
<dbReference type="Proteomes" id="UP000008936">
    <property type="component" value="Chromosome"/>
</dbReference>
<dbReference type="GO" id="GO:0005886">
    <property type="term" value="C:plasma membrane"/>
    <property type="evidence" value="ECO:0007669"/>
    <property type="project" value="UniProtKB-SubCell"/>
</dbReference>
<dbReference type="GO" id="GO:0008495">
    <property type="term" value="F:protoheme IX farnesyltransferase activity"/>
    <property type="evidence" value="ECO:0007669"/>
    <property type="project" value="UniProtKB-UniRule"/>
</dbReference>
<dbReference type="GO" id="GO:0048034">
    <property type="term" value="P:heme O biosynthetic process"/>
    <property type="evidence" value="ECO:0007669"/>
    <property type="project" value="UniProtKB-UniRule"/>
</dbReference>
<dbReference type="CDD" id="cd13957">
    <property type="entry name" value="PT_UbiA_Cox10"/>
    <property type="match status" value="1"/>
</dbReference>
<dbReference type="FunFam" id="1.10.357.140:FF:000001">
    <property type="entry name" value="Protoheme IX farnesyltransferase"/>
    <property type="match status" value="1"/>
</dbReference>
<dbReference type="Gene3D" id="1.10.357.140">
    <property type="entry name" value="UbiA prenyltransferase"/>
    <property type="match status" value="1"/>
</dbReference>
<dbReference type="HAMAP" id="MF_00154">
    <property type="entry name" value="CyoE_CtaB"/>
    <property type="match status" value="1"/>
</dbReference>
<dbReference type="InterPro" id="IPR006369">
    <property type="entry name" value="Protohaem_IX_farnesylTrfase"/>
</dbReference>
<dbReference type="InterPro" id="IPR000537">
    <property type="entry name" value="UbiA_prenyltransferase"/>
</dbReference>
<dbReference type="InterPro" id="IPR030470">
    <property type="entry name" value="UbiA_prenylTrfase_CS"/>
</dbReference>
<dbReference type="InterPro" id="IPR044878">
    <property type="entry name" value="UbiA_sf"/>
</dbReference>
<dbReference type="NCBIfam" id="TIGR01473">
    <property type="entry name" value="cyoE_ctaB"/>
    <property type="match status" value="1"/>
</dbReference>
<dbReference type="NCBIfam" id="NF003348">
    <property type="entry name" value="PRK04375.1-1"/>
    <property type="match status" value="1"/>
</dbReference>
<dbReference type="PANTHER" id="PTHR43448">
    <property type="entry name" value="PROTOHEME IX FARNESYLTRANSFERASE, MITOCHONDRIAL"/>
    <property type="match status" value="1"/>
</dbReference>
<dbReference type="PANTHER" id="PTHR43448:SF2">
    <property type="entry name" value="PROTOHEME IX FARNESYLTRANSFERASE, MITOCHONDRIAL"/>
    <property type="match status" value="1"/>
</dbReference>
<dbReference type="Pfam" id="PF01040">
    <property type="entry name" value="UbiA"/>
    <property type="match status" value="1"/>
</dbReference>
<dbReference type="PROSITE" id="PS00943">
    <property type="entry name" value="UBIA"/>
    <property type="match status" value="1"/>
</dbReference>
<comment type="function">
    <text evidence="1">Converts heme B (protoheme IX) to heme O by substitution of the vinyl group on carbon 2 of heme B porphyrin ring with a hydroxyethyl farnesyl side group.</text>
</comment>
<comment type="catalytic activity">
    <reaction evidence="1">
        <text>heme b + (2E,6E)-farnesyl diphosphate + H2O = Fe(II)-heme o + diphosphate</text>
        <dbReference type="Rhea" id="RHEA:28070"/>
        <dbReference type="ChEBI" id="CHEBI:15377"/>
        <dbReference type="ChEBI" id="CHEBI:33019"/>
        <dbReference type="ChEBI" id="CHEBI:60344"/>
        <dbReference type="ChEBI" id="CHEBI:60530"/>
        <dbReference type="ChEBI" id="CHEBI:175763"/>
        <dbReference type="EC" id="2.5.1.141"/>
    </reaction>
</comment>
<comment type="pathway">
    <text evidence="1">Porphyrin-containing compound metabolism; heme O biosynthesis; heme O from protoheme: step 1/1.</text>
</comment>
<comment type="subcellular location">
    <subcellularLocation>
        <location evidence="1">Cell inner membrane</location>
        <topology evidence="1">Multi-pass membrane protein</topology>
    </subcellularLocation>
</comment>
<comment type="miscellaneous">
    <text evidence="1">Carbon 2 of the heme B porphyrin ring is defined according to the Fischer nomenclature.</text>
</comment>
<comment type="similarity">
    <text evidence="1">Belongs to the UbiA prenyltransferase family. Protoheme IX farnesyltransferase subfamily.</text>
</comment>
<comment type="sequence caution" evidence="2">
    <conflict type="erroneous initiation">
        <sequence resource="EMBL-CDS" id="ABG17255"/>
    </conflict>
</comment>
<sequence length="296" mass="32179">MMIKQYLQVTKPGIIFGNLISVIGGFLLASKGDIDYPLFLSTLLGVSLVVASGCVFNNYIDRDIDKIMERTKNRVLVKGLIDPKVSLIYASVLGIAGMLLLYVAANALAMMLAVIGFVIYVGVYSLYMKRKSVYGTLIGSLSGAAPPVIGYCAVTGQFDTGALILLLIFSLWQMPHSYAIAIFRFKDYQAANIPVLPVIKGISVTKNHITLYILAFMVATLMLTLSGYAGYKYLVVAAAVSVWWLGMALRGYKATNDSVWARKLFVFSIIAITSLSVMMSVDFNVHSSAVLLTYAG</sequence>
<gene>
    <name evidence="1" type="primary">cyoE</name>
    <name type="ordered locus">YPN_0923</name>
    <name type="ORF">YP516_0999</name>
</gene>
<keyword id="KW-0997">Cell inner membrane</keyword>
<keyword id="KW-1003">Cell membrane</keyword>
<keyword id="KW-0350">Heme biosynthesis</keyword>
<keyword id="KW-0472">Membrane</keyword>
<keyword id="KW-0808">Transferase</keyword>
<keyword id="KW-0812">Transmembrane</keyword>
<keyword id="KW-1133">Transmembrane helix</keyword>
<proteinExistence type="inferred from homology"/>
<reference key="1">
    <citation type="journal article" date="2006" name="J. Bacteriol.">
        <title>Complete genome sequence of Yersinia pestis strains Antiqua and Nepal516: evidence of gene reduction in an emerging pathogen.</title>
        <authorList>
            <person name="Chain P.S.G."/>
            <person name="Hu P."/>
            <person name="Malfatti S.A."/>
            <person name="Radnedge L."/>
            <person name="Larimer F."/>
            <person name="Vergez L.M."/>
            <person name="Worsham P."/>
            <person name="Chu M.C."/>
            <person name="Andersen G.L."/>
        </authorList>
    </citation>
    <scope>NUCLEOTIDE SEQUENCE [LARGE SCALE GENOMIC DNA]</scope>
    <source>
        <strain>Nepal516</strain>
    </source>
</reference>
<reference key="2">
    <citation type="submission" date="2009-04" db="EMBL/GenBank/DDBJ databases">
        <title>Yersinia pestis Nepal516A whole genome shotgun sequencing project.</title>
        <authorList>
            <person name="Plunkett G. III"/>
            <person name="Anderson B.D."/>
            <person name="Baumler D.J."/>
            <person name="Burland V."/>
            <person name="Cabot E.L."/>
            <person name="Glasner J.D."/>
            <person name="Mau B."/>
            <person name="Neeno-Eckwall E."/>
            <person name="Perna N.T."/>
            <person name="Munk A.C."/>
            <person name="Tapia R."/>
            <person name="Green L.D."/>
            <person name="Rogers Y.C."/>
            <person name="Detter J.C."/>
            <person name="Bruce D.C."/>
            <person name="Brettin T.S."/>
        </authorList>
    </citation>
    <scope>NUCLEOTIDE SEQUENCE [LARGE SCALE GENOMIC DNA]</scope>
    <source>
        <strain>Nepal516</strain>
    </source>
</reference>
<feature type="chain" id="PRO_0000326980" description="Protoheme IX farnesyltransferase">
    <location>
        <begin position="1"/>
        <end position="296"/>
    </location>
</feature>
<feature type="transmembrane region" description="Helical" evidence="1">
    <location>
        <begin position="9"/>
        <end position="29"/>
    </location>
</feature>
<feature type="transmembrane region" description="Helical" evidence="1">
    <location>
        <begin position="36"/>
        <end position="56"/>
    </location>
</feature>
<feature type="transmembrane region" description="Helical" evidence="1">
    <location>
        <begin position="75"/>
        <end position="95"/>
    </location>
</feature>
<feature type="transmembrane region" description="Helical" evidence="1">
    <location>
        <begin position="99"/>
        <end position="119"/>
    </location>
</feature>
<feature type="transmembrane region" description="Helical" evidence="1">
    <location>
        <begin position="133"/>
        <end position="153"/>
    </location>
</feature>
<feature type="transmembrane region" description="Helical" evidence="1">
    <location>
        <begin position="163"/>
        <end position="183"/>
    </location>
</feature>
<feature type="transmembrane region" description="Helical" evidence="1">
    <location>
        <begin position="209"/>
        <end position="229"/>
    </location>
</feature>
<feature type="transmembrane region" description="Helical" evidence="1">
    <location>
        <begin position="234"/>
        <end position="254"/>
    </location>
</feature>
<feature type="transmembrane region" description="Helical" evidence="1">
    <location>
        <begin position="265"/>
        <end position="285"/>
    </location>
</feature>
<organism>
    <name type="scientific">Yersinia pestis bv. Antiqua (strain Nepal516)</name>
    <dbReference type="NCBI Taxonomy" id="377628"/>
    <lineage>
        <taxon>Bacteria</taxon>
        <taxon>Pseudomonadati</taxon>
        <taxon>Pseudomonadota</taxon>
        <taxon>Gammaproteobacteria</taxon>
        <taxon>Enterobacterales</taxon>
        <taxon>Yersiniaceae</taxon>
        <taxon>Yersinia</taxon>
    </lineage>
</organism>